<comment type="function">
    <text evidence="1">The 120 kDa surface-exposed protein is a major structural protein which may play a role as a rickettsial virulence factor and/or immunogen during infection.</text>
</comment>
<comment type="function">
    <text evidence="1">The 32 kDa beta peptide may serve as a membrane anchor.</text>
</comment>
<comment type="subcellular location">
    <molecule>Outer membrane protein B</molecule>
    <subcellularLocation>
        <location evidence="1">Periplasm</location>
    </subcellularLocation>
</comment>
<comment type="subcellular location">
    <molecule>120 kDa surface-exposed protein</molecule>
    <subcellularLocation>
        <location>Secreted</location>
    </subcellularLocation>
    <subcellularLocation>
        <location>Cell surface</location>
    </subcellularLocation>
    <text evidence="1">Surface exposed. This bacterium is covered by a S-layer with hexagonal symmetry (By similarity).</text>
</comment>
<comment type="subcellular location">
    <molecule>32 kDa beta peptide</molecule>
    <subcellularLocation>
        <location evidence="4">Cell outer membrane</location>
        <topology evidence="4">Multi-pass membrane protein</topology>
    </subcellularLocation>
    <text>The cleaved C-terminal fragment (autotransporter domain) is localized in the outer membrane.</text>
</comment>
<comment type="similarity">
    <text evidence="4">Belongs to the rickettsiae OmpA/OmpB family.</text>
</comment>
<evidence type="ECO:0000250" key="1"/>
<evidence type="ECO:0000255" key="2"/>
<evidence type="ECO:0000255" key="3">
    <source>
        <dbReference type="PROSITE-ProRule" id="PRU00556"/>
    </source>
</evidence>
<evidence type="ECO:0000305" key="4"/>
<sequence>MAQKPNFLKKLISAGLVTASTATIVASFAGSAMGAAIQQNRTTNGVATTVDGVGFDQTVALANVAVAPNAVITANANNGINLNTPAGSFNGLFLSNANNLAVTVSEDTTLGFINNAANNANRFNLTLDAGKTLTITGQGITNVQSAATHNAQNIVAKFNGGAAIANNDLSGLGTIDFGAAASTLVFDLANPTTQKAPLILADNALIVNGANGTLNVTNGFIQVSDKSFATVKAINIGDGQGFMFNTNATNANALNLQAGGTTINFNGTDGTGRLVLLSKNGAATDFNVTGSLGGNLKGIIELNTVAINGQLIANAGPANAVIGTNNGAGRAAGFVVSVDNGKAATIDGQVYAKDMVIQSANANGQVNFRHIVDVGIDGTTAFKTAASIVAITQNSNFGTTDFGNLAAQVTVPDTMTLTGNFTGDANNPGNTAGVITFAANGTLASASADANVAVTNNITAIEASGVGVVQLSGTHTAELRLGNAGSVFKLADGTVINGKVNQTVLVGGVLAAGAITLDGSATITGDIGNGGGGAALQSITLANDATKTLTLGGANIISANGGTINFQANGGTIKLTSTQNNIVVDCDLAIATDQTGVVDASSLTNAQTLTISGTIGIIGANNTTLGQFNIGSSKTTLNGGNVAINELVIGNNGSVQFAHNTYLITRTTNAAGQGKIIFNPVVNNNTTLAAGTNLGSAANPLAEINFGSKGARADTVLNVGEGVNLYATNITTTDANVGSFVFNAGGKNIVSGTVGGQQGNKFNTVALDNGTTVKFLGNATFNGNTTIAANSTLQISGNYTADFIASADGTGIVEFVNTGPINVTLNKQAVPVNALKQITVSGPGNVVVNEIGNAGNYHGAMTDTIAFENSSLGAVLFLPSGIPFNDAGNTIPLTIKSTVGNETAEGFSVPSVIVSGVDSVIADGQVIGDQNNIVGLGLGSDNGIIVNATTLYAGIGTINNNQGTVTLSGGVPNTPGTVYGLGTGIGASKFKQVTFTTDYNNLGNIIATNTTINDGVTVTTGGIAAGGIAGTDFDGKITLGSVNGNANVRFADGIFSNSTSMIVTTKANNGTVTYLGNAFVGNIGDSDTPVASVRFTGSNNGAGLKGNIYSQVIDFGTYNLGIVNSNVILGGSTTAINGKIDLLTNTLTFAGGTSTWGNNTSIETTLTLANGNIGHIVIAEGAQVNATTTGTTTINVQDNANANFSGTQTYTLIQGGARFNGTLGGPNFTVTGSNRFVNYGLIRAANQDYVITRTNNAENIVTNDITNSPFGGAPGVGQNVTTFVNATNTAAYNNLLLAKNSADSANFVGTIVTDTSAAITNAQLDVAKDIQAQLGNRLGALRYLGTPEMVGSEAGAIPAAVAAGDEAVDNVAYGIWAKPFYTDAHQSKKGGLAGYKAKTTGIVIGLDTLANNNLMIGAAIGITKTDIKHQDYKKGDKTDVNGFSFSLYGAQQFVENFFAQGSAIFSLNQVKNKSQRYFFDANGNMSKQIAAGNYDNMTFGGNLTVGYDYNAMQGVLVTPMAGLSYLKSSDENYKETGTTVANKQVNSKFSDRTDLIVGAKVAGGTMNITDFAVYPEVHAFVVHKVTGRLSKTQSVLDGQVTPCISQPDRTAKTSYNLGLSASIRSDAKMEYGIGYDAQIASKYTAHQGTLKVRVNF</sequence>
<protein>
    <recommendedName>
        <fullName>Outer membrane protein B</fullName>
    </recommendedName>
    <alternativeName>
        <fullName>168 kDa surface-layer protein</fullName>
    </alternativeName>
    <alternativeName>
        <fullName>Cell surface antigen 5</fullName>
        <shortName>Sca5</shortName>
    </alternativeName>
    <alternativeName>
        <fullName>Surface protein antigen</fullName>
    </alternativeName>
    <alternativeName>
        <fullName>rOmp B</fullName>
        <shortName>rOmpB</shortName>
    </alternativeName>
    <component>
        <recommendedName>
            <fullName>120 kDa surface-exposed protein</fullName>
        </recommendedName>
        <alternativeName>
            <fullName>120 kDa outer membrane protein OmpB</fullName>
        </alternativeName>
        <alternativeName>
            <fullName>Surface protein antigen</fullName>
        </alternativeName>
        <alternativeName>
            <fullName>p120</fullName>
        </alternativeName>
    </component>
    <component>
        <recommendedName>
            <fullName>32 kDa beta peptide</fullName>
        </recommendedName>
    </component>
</protein>
<name>OMPB_RICJY</name>
<reference key="1">
    <citation type="submission" date="1997-05" db="EMBL/GenBank/DDBJ databases">
        <title>Sequencing of the gene encoding the protein rOmp B of Rickettsia japonica.</title>
        <authorList>
            <person name="Uchiyama T."/>
        </authorList>
    </citation>
    <scope>NUCLEOTIDE SEQUENCE [GENOMIC DNA]</scope>
    <source>
        <strain>ATCC VR-1363 / YH</strain>
    </source>
</reference>
<reference key="2">
    <citation type="journal article" date="2013" name="PLoS ONE">
        <title>Complete genomic DNA sequence of the East Asian spotted fever disease agent Rickettsia japonica.</title>
        <authorList>
            <person name="Matsutani M."/>
            <person name="Ogawa M."/>
            <person name="Takaoka N."/>
            <person name="Hanaoka N."/>
            <person name="Toh H."/>
            <person name="Yamashita A."/>
            <person name="Oshima K."/>
            <person name="Hirakawa H."/>
            <person name="Kuhara S."/>
            <person name="Suzuki H."/>
            <person name="Hattori M."/>
            <person name="Kishimoto T."/>
            <person name="Ando S."/>
            <person name="Azuma Y."/>
            <person name="Shirai M."/>
        </authorList>
    </citation>
    <scope>NUCLEOTIDE SEQUENCE [LARGE SCALE GENOMIC DNA]</scope>
    <source>
        <strain>ATCC VR-1363 / YH</strain>
    </source>
</reference>
<accession>O06653</accession>
<accession>G4KLB3</accession>
<dbReference type="EMBL" id="AB003681">
    <property type="protein sequence ID" value="BAA20138.1"/>
    <property type="molecule type" value="Genomic_DNA"/>
</dbReference>
<dbReference type="EMBL" id="AP011533">
    <property type="protein sequence ID" value="BAK97005.1"/>
    <property type="molecule type" value="Genomic_DNA"/>
</dbReference>
<dbReference type="PIR" id="JC1340">
    <property type="entry name" value="JC1340"/>
</dbReference>
<dbReference type="RefSeq" id="WP_014121034.1">
    <property type="nucleotide sequence ID" value="NC_016050.1"/>
</dbReference>
<dbReference type="SMR" id="O06653"/>
<dbReference type="GeneID" id="34514533"/>
<dbReference type="KEGG" id="rja:RJP_0809"/>
<dbReference type="HOGENOM" id="CLU_000413_0_0_5"/>
<dbReference type="Proteomes" id="UP000002659">
    <property type="component" value="Chromosome"/>
</dbReference>
<dbReference type="GO" id="GO:0009279">
    <property type="term" value="C:cell outer membrane"/>
    <property type="evidence" value="ECO:0007669"/>
    <property type="project" value="UniProtKB-SubCell"/>
</dbReference>
<dbReference type="GO" id="GO:0009986">
    <property type="term" value="C:cell surface"/>
    <property type="evidence" value="ECO:0007669"/>
    <property type="project" value="UniProtKB-SubCell"/>
</dbReference>
<dbReference type="GO" id="GO:0005576">
    <property type="term" value="C:extracellular region"/>
    <property type="evidence" value="ECO:0007669"/>
    <property type="project" value="UniProtKB-SubCell"/>
</dbReference>
<dbReference type="GO" id="GO:0042597">
    <property type="term" value="C:periplasmic space"/>
    <property type="evidence" value="ECO:0007669"/>
    <property type="project" value="UniProtKB-SubCell"/>
</dbReference>
<dbReference type="Gene3D" id="2.40.128.130">
    <property type="entry name" value="Autotransporter beta-domain"/>
    <property type="match status" value="1"/>
</dbReference>
<dbReference type="InterPro" id="IPR005546">
    <property type="entry name" value="Autotransporte_beta"/>
</dbReference>
<dbReference type="InterPro" id="IPR036709">
    <property type="entry name" value="Autotransporte_beta_dom_sf"/>
</dbReference>
<dbReference type="InterPro" id="IPR006315">
    <property type="entry name" value="OM_autotransptr_brl_dom"/>
</dbReference>
<dbReference type="InterPro" id="IPR022095">
    <property type="entry name" value="OmpB_passenger_Rickettsia"/>
</dbReference>
<dbReference type="InterPro" id="IPR048195">
    <property type="entry name" value="OmpB_ricketsia"/>
</dbReference>
<dbReference type="NCBIfam" id="TIGR01414">
    <property type="entry name" value="autotrans_barl"/>
    <property type="match status" value="1"/>
</dbReference>
<dbReference type="NCBIfam" id="NF041657">
    <property type="entry name" value="ompB_ricketsia"/>
    <property type="match status" value="1"/>
</dbReference>
<dbReference type="Pfam" id="PF03797">
    <property type="entry name" value="Autotransporter"/>
    <property type="match status" value="1"/>
</dbReference>
<dbReference type="Pfam" id="PF12334">
    <property type="entry name" value="rOmpB_passenger"/>
    <property type="match status" value="1"/>
</dbReference>
<dbReference type="SMART" id="SM00869">
    <property type="entry name" value="Autotransporter"/>
    <property type="match status" value="1"/>
</dbReference>
<dbReference type="SUPFAM" id="SSF103515">
    <property type="entry name" value="Autotransporter"/>
    <property type="match status" value="1"/>
</dbReference>
<dbReference type="PROSITE" id="PS51208">
    <property type="entry name" value="AUTOTRANSPORTER"/>
    <property type="match status" value="1"/>
</dbReference>
<organism>
    <name type="scientific">Rickettsia japonica (strain ATCC VR-1363 / YH)</name>
    <dbReference type="NCBI Taxonomy" id="652620"/>
    <lineage>
        <taxon>Bacteria</taxon>
        <taxon>Pseudomonadati</taxon>
        <taxon>Pseudomonadota</taxon>
        <taxon>Alphaproteobacteria</taxon>
        <taxon>Rickettsiales</taxon>
        <taxon>Rickettsiaceae</taxon>
        <taxon>Rickettsieae</taxon>
        <taxon>Rickettsia</taxon>
        <taxon>spotted fever group</taxon>
    </lineage>
</organism>
<gene>
    <name type="primary">ompB</name>
    <name type="ordered locus">RJP_0809</name>
</gene>
<keyword id="KW-0998">Cell outer membrane</keyword>
<keyword id="KW-0472">Membrane</keyword>
<keyword id="KW-0574">Periplasm</keyword>
<keyword id="KW-0964">Secreted</keyword>
<keyword id="KW-0812">Transmembrane</keyword>
<keyword id="KW-1134">Transmembrane beta strand</keyword>
<keyword id="KW-0843">Virulence</keyword>
<feature type="chain" id="PRO_0000387580" description="Outer membrane protein B">
    <location>
        <begin position="1"/>
        <end position="1656"/>
    </location>
</feature>
<feature type="chain" id="PRO_0000032651" description="120 kDa surface-exposed protein">
    <location>
        <begin position="1"/>
        <end position="1338"/>
    </location>
</feature>
<feature type="propeptide" id="PRO_0000032652" evidence="2">
    <location>
        <begin position="1339"/>
        <end position="1363"/>
    </location>
</feature>
<feature type="chain" id="PRO_0000032653" description="32 kDa beta peptide">
    <location>
        <begin position="1364"/>
        <end position="1656"/>
    </location>
</feature>
<feature type="domain" description="Autotransporter" evidence="3">
    <location>
        <begin position="1368"/>
        <end position="1656"/>
    </location>
</feature>
<proteinExistence type="inferred from homology"/>